<evidence type="ECO:0000250" key="1">
    <source>
        <dbReference type="UniProtKB" id="B0BNN3"/>
    </source>
</evidence>
<evidence type="ECO:0000250" key="2">
    <source>
        <dbReference type="UniProtKB" id="P00915"/>
    </source>
</evidence>
<evidence type="ECO:0000250" key="3">
    <source>
        <dbReference type="UniProtKB" id="P00918"/>
    </source>
</evidence>
<evidence type="ECO:0000255" key="4">
    <source>
        <dbReference type="PROSITE-ProRule" id="PRU01134"/>
    </source>
</evidence>
<evidence type="ECO:0000256" key="5">
    <source>
        <dbReference type="SAM" id="MobiDB-lite"/>
    </source>
</evidence>
<evidence type="ECO:0000305" key="6"/>
<reference key="1">
    <citation type="journal article" date="1986" name="J. Mol. Evol.">
        <title>Molecular evolution of the carbonic anhydrase genes: calculation of divergence time for mouse carbonic anhydrase I and II.</title>
        <authorList>
            <person name="Fraser P.J."/>
            <person name="Curtis P.J."/>
        </authorList>
    </citation>
    <scope>NUCLEOTIDE SEQUENCE [MRNA]</scope>
</reference>
<reference key="2">
    <citation type="journal article" date="1989" name="Mol. Cell. Biol.">
        <title>The mouse carbonic anhydrase I gene contains two tissue-specific promoters.</title>
        <authorList>
            <person name="Fraser P.J."/>
            <person name="Cummings P."/>
            <person name="Curtis P.J."/>
        </authorList>
    </citation>
    <scope>NUCLEOTIDE SEQUENCE [GENOMIC DNA]</scope>
    <source>
        <tissue>Brain</tissue>
    </source>
</reference>
<reference key="3">
    <citation type="journal article" date="2005" name="Science">
        <title>The transcriptional landscape of the mammalian genome.</title>
        <authorList>
            <person name="Carninci P."/>
            <person name="Kasukawa T."/>
            <person name="Katayama S."/>
            <person name="Gough J."/>
            <person name="Frith M.C."/>
            <person name="Maeda N."/>
            <person name="Oyama R."/>
            <person name="Ravasi T."/>
            <person name="Lenhard B."/>
            <person name="Wells C."/>
            <person name="Kodzius R."/>
            <person name="Shimokawa K."/>
            <person name="Bajic V.B."/>
            <person name="Brenner S.E."/>
            <person name="Batalov S."/>
            <person name="Forrest A.R."/>
            <person name="Zavolan M."/>
            <person name="Davis M.J."/>
            <person name="Wilming L.G."/>
            <person name="Aidinis V."/>
            <person name="Allen J.E."/>
            <person name="Ambesi-Impiombato A."/>
            <person name="Apweiler R."/>
            <person name="Aturaliya R.N."/>
            <person name="Bailey T.L."/>
            <person name="Bansal M."/>
            <person name="Baxter L."/>
            <person name="Beisel K.W."/>
            <person name="Bersano T."/>
            <person name="Bono H."/>
            <person name="Chalk A.M."/>
            <person name="Chiu K.P."/>
            <person name="Choudhary V."/>
            <person name="Christoffels A."/>
            <person name="Clutterbuck D.R."/>
            <person name="Crowe M.L."/>
            <person name="Dalla E."/>
            <person name="Dalrymple B.P."/>
            <person name="de Bono B."/>
            <person name="Della Gatta G."/>
            <person name="di Bernardo D."/>
            <person name="Down T."/>
            <person name="Engstrom P."/>
            <person name="Fagiolini M."/>
            <person name="Faulkner G."/>
            <person name="Fletcher C.F."/>
            <person name="Fukushima T."/>
            <person name="Furuno M."/>
            <person name="Futaki S."/>
            <person name="Gariboldi M."/>
            <person name="Georgii-Hemming P."/>
            <person name="Gingeras T.R."/>
            <person name="Gojobori T."/>
            <person name="Green R.E."/>
            <person name="Gustincich S."/>
            <person name="Harbers M."/>
            <person name="Hayashi Y."/>
            <person name="Hensch T.K."/>
            <person name="Hirokawa N."/>
            <person name="Hill D."/>
            <person name="Huminiecki L."/>
            <person name="Iacono M."/>
            <person name="Ikeo K."/>
            <person name="Iwama A."/>
            <person name="Ishikawa T."/>
            <person name="Jakt M."/>
            <person name="Kanapin A."/>
            <person name="Katoh M."/>
            <person name="Kawasawa Y."/>
            <person name="Kelso J."/>
            <person name="Kitamura H."/>
            <person name="Kitano H."/>
            <person name="Kollias G."/>
            <person name="Krishnan S.P."/>
            <person name="Kruger A."/>
            <person name="Kummerfeld S.K."/>
            <person name="Kurochkin I.V."/>
            <person name="Lareau L.F."/>
            <person name="Lazarevic D."/>
            <person name="Lipovich L."/>
            <person name="Liu J."/>
            <person name="Liuni S."/>
            <person name="McWilliam S."/>
            <person name="Madan Babu M."/>
            <person name="Madera M."/>
            <person name="Marchionni L."/>
            <person name="Matsuda H."/>
            <person name="Matsuzawa S."/>
            <person name="Miki H."/>
            <person name="Mignone F."/>
            <person name="Miyake S."/>
            <person name="Morris K."/>
            <person name="Mottagui-Tabar S."/>
            <person name="Mulder N."/>
            <person name="Nakano N."/>
            <person name="Nakauchi H."/>
            <person name="Ng P."/>
            <person name="Nilsson R."/>
            <person name="Nishiguchi S."/>
            <person name="Nishikawa S."/>
            <person name="Nori F."/>
            <person name="Ohara O."/>
            <person name="Okazaki Y."/>
            <person name="Orlando V."/>
            <person name="Pang K.C."/>
            <person name="Pavan W.J."/>
            <person name="Pavesi G."/>
            <person name="Pesole G."/>
            <person name="Petrovsky N."/>
            <person name="Piazza S."/>
            <person name="Reed J."/>
            <person name="Reid J.F."/>
            <person name="Ring B.Z."/>
            <person name="Ringwald M."/>
            <person name="Rost B."/>
            <person name="Ruan Y."/>
            <person name="Salzberg S.L."/>
            <person name="Sandelin A."/>
            <person name="Schneider C."/>
            <person name="Schoenbach C."/>
            <person name="Sekiguchi K."/>
            <person name="Semple C.A."/>
            <person name="Seno S."/>
            <person name="Sessa L."/>
            <person name="Sheng Y."/>
            <person name="Shibata Y."/>
            <person name="Shimada H."/>
            <person name="Shimada K."/>
            <person name="Silva D."/>
            <person name="Sinclair B."/>
            <person name="Sperling S."/>
            <person name="Stupka E."/>
            <person name="Sugiura K."/>
            <person name="Sultana R."/>
            <person name="Takenaka Y."/>
            <person name="Taki K."/>
            <person name="Tammoja K."/>
            <person name="Tan S.L."/>
            <person name="Tang S."/>
            <person name="Taylor M.S."/>
            <person name="Tegner J."/>
            <person name="Teichmann S.A."/>
            <person name="Ueda H.R."/>
            <person name="van Nimwegen E."/>
            <person name="Verardo R."/>
            <person name="Wei C.L."/>
            <person name="Yagi K."/>
            <person name="Yamanishi H."/>
            <person name="Zabarovsky E."/>
            <person name="Zhu S."/>
            <person name="Zimmer A."/>
            <person name="Hide W."/>
            <person name="Bult C."/>
            <person name="Grimmond S.M."/>
            <person name="Teasdale R.D."/>
            <person name="Liu E.T."/>
            <person name="Brusic V."/>
            <person name="Quackenbush J."/>
            <person name="Wahlestedt C."/>
            <person name="Mattick J.S."/>
            <person name="Hume D.A."/>
            <person name="Kai C."/>
            <person name="Sasaki D."/>
            <person name="Tomaru Y."/>
            <person name="Fukuda S."/>
            <person name="Kanamori-Katayama M."/>
            <person name="Suzuki M."/>
            <person name="Aoki J."/>
            <person name="Arakawa T."/>
            <person name="Iida J."/>
            <person name="Imamura K."/>
            <person name="Itoh M."/>
            <person name="Kato T."/>
            <person name="Kawaji H."/>
            <person name="Kawagashira N."/>
            <person name="Kawashima T."/>
            <person name="Kojima M."/>
            <person name="Kondo S."/>
            <person name="Konno H."/>
            <person name="Nakano K."/>
            <person name="Ninomiya N."/>
            <person name="Nishio T."/>
            <person name="Okada M."/>
            <person name="Plessy C."/>
            <person name="Shibata K."/>
            <person name="Shiraki T."/>
            <person name="Suzuki S."/>
            <person name="Tagami M."/>
            <person name="Waki K."/>
            <person name="Watahiki A."/>
            <person name="Okamura-Oho Y."/>
            <person name="Suzuki H."/>
            <person name="Kawai J."/>
            <person name="Hayashizaki Y."/>
        </authorList>
    </citation>
    <scope>NUCLEOTIDE SEQUENCE [LARGE SCALE MRNA]</scope>
    <source>
        <strain>BALB/cJ</strain>
        <strain>C57BL/6J</strain>
        <strain>NOD</strain>
        <tissue>Cecum</tissue>
        <tissue>Spleen</tissue>
    </source>
</reference>
<reference key="4">
    <citation type="journal article" date="2009" name="PLoS Biol.">
        <title>Lineage-specific biology revealed by a finished genome assembly of the mouse.</title>
        <authorList>
            <person name="Church D.M."/>
            <person name="Goodstadt L."/>
            <person name="Hillier L.W."/>
            <person name="Zody M.C."/>
            <person name="Goldstein S."/>
            <person name="She X."/>
            <person name="Bult C.J."/>
            <person name="Agarwala R."/>
            <person name="Cherry J.L."/>
            <person name="DiCuccio M."/>
            <person name="Hlavina W."/>
            <person name="Kapustin Y."/>
            <person name="Meric P."/>
            <person name="Maglott D."/>
            <person name="Birtle Z."/>
            <person name="Marques A.C."/>
            <person name="Graves T."/>
            <person name="Zhou S."/>
            <person name="Teague B."/>
            <person name="Potamousis K."/>
            <person name="Churas C."/>
            <person name="Place M."/>
            <person name="Herschleb J."/>
            <person name="Runnheim R."/>
            <person name="Forrest D."/>
            <person name="Amos-Landgraf J."/>
            <person name="Schwartz D.C."/>
            <person name="Cheng Z."/>
            <person name="Lindblad-Toh K."/>
            <person name="Eichler E.E."/>
            <person name="Ponting C.P."/>
        </authorList>
    </citation>
    <scope>NUCLEOTIDE SEQUENCE [LARGE SCALE GENOMIC DNA]</scope>
    <source>
        <strain>C57BL/6J</strain>
    </source>
</reference>
<reference key="5">
    <citation type="submission" date="2005-07" db="EMBL/GenBank/DDBJ databases">
        <authorList>
            <person name="Mural R.J."/>
            <person name="Adams M.D."/>
            <person name="Myers E.W."/>
            <person name="Smith H.O."/>
            <person name="Venter J.C."/>
        </authorList>
    </citation>
    <scope>NUCLEOTIDE SEQUENCE [LARGE SCALE GENOMIC DNA]</scope>
</reference>
<reference key="6">
    <citation type="journal article" date="2004" name="Genome Res.">
        <title>The status, quality, and expansion of the NIH full-length cDNA project: the Mammalian Gene Collection (MGC).</title>
        <authorList>
            <consortium name="The MGC Project Team"/>
        </authorList>
    </citation>
    <scope>NUCLEOTIDE SEQUENCE [LARGE SCALE MRNA]</scope>
    <source>
        <strain>FVB/N</strain>
        <tissue>Brain</tissue>
        <tissue>Colon</tissue>
    </source>
</reference>
<reference key="7">
    <citation type="journal article" date="2010" name="Cell">
        <title>A tissue-specific atlas of mouse protein phosphorylation and expression.</title>
        <authorList>
            <person name="Huttlin E.L."/>
            <person name="Jedrychowski M.P."/>
            <person name="Elias J.E."/>
            <person name="Goswami T."/>
            <person name="Rad R."/>
            <person name="Beausoleil S.A."/>
            <person name="Villen J."/>
            <person name="Haas W."/>
            <person name="Sowa M.E."/>
            <person name="Gygi S.P."/>
        </authorList>
    </citation>
    <scope>IDENTIFICATION BY MASS SPECTROMETRY [LARGE SCALE ANALYSIS]</scope>
    <source>
        <tissue>Brain</tissue>
        <tissue>Brown adipose tissue</tissue>
        <tissue>Heart</tissue>
        <tissue>Kidney</tissue>
        <tissue>Liver</tissue>
        <tissue>Lung</tissue>
        <tissue>Pancreas</tissue>
        <tissue>Spleen</tissue>
        <tissue>Testis</tissue>
    </source>
</reference>
<protein>
    <recommendedName>
        <fullName>Carbonic anhydrase 1</fullName>
        <ecNumber evidence="2">4.2.1.1</ecNumber>
    </recommendedName>
    <alternativeName>
        <fullName>Carbonate dehydratase I</fullName>
    </alternativeName>
    <alternativeName>
        <fullName>Carbonic anhydrase I</fullName>
        <shortName>CA-I</shortName>
    </alternativeName>
    <alternativeName>
        <fullName>Cyanamide hydratase CA1</fullName>
        <ecNumber evidence="2">4.2.1.69</ecNumber>
    </alternativeName>
</protein>
<keyword id="KW-0007">Acetylation</keyword>
<keyword id="KW-0963">Cytoplasm</keyword>
<keyword id="KW-0456">Lyase</keyword>
<keyword id="KW-0479">Metal-binding</keyword>
<keyword id="KW-1185">Reference proteome</keyword>
<keyword id="KW-0862">Zinc</keyword>
<proteinExistence type="evidence at protein level"/>
<organism>
    <name type="scientific">Mus musculus</name>
    <name type="common">Mouse</name>
    <dbReference type="NCBI Taxonomy" id="10090"/>
    <lineage>
        <taxon>Eukaryota</taxon>
        <taxon>Metazoa</taxon>
        <taxon>Chordata</taxon>
        <taxon>Craniata</taxon>
        <taxon>Vertebrata</taxon>
        <taxon>Euteleostomi</taxon>
        <taxon>Mammalia</taxon>
        <taxon>Eutheria</taxon>
        <taxon>Euarchontoglires</taxon>
        <taxon>Glires</taxon>
        <taxon>Rodentia</taxon>
        <taxon>Myomorpha</taxon>
        <taxon>Muroidea</taxon>
        <taxon>Muridae</taxon>
        <taxon>Murinae</taxon>
        <taxon>Mus</taxon>
        <taxon>Mus</taxon>
    </lineage>
</organism>
<feature type="initiator methionine" description="Removed" evidence="2">
    <location>
        <position position="1"/>
    </location>
</feature>
<feature type="chain" id="PRO_0000077413" description="Carbonic anhydrase 1">
    <location>
        <begin position="2"/>
        <end position="261"/>
    </location>
</feature>
<feature type="domain" description="Alpha-carbonic anhydrase" evidence="4">
    <location>
        <begin position="4"/>
        <end position="261"/>
    </location>
</feature>
<feature type="region of interest" description="Disordered" evidence="5">
    <location>
        <begin position="239"/>
        <end position="261"/>
    </location>
</feature>
<feature type="active site" description="Proton donor/acceptor" evidence="3">
    <location>
        <position position="65"/>
    </location>
</feature>
<feature type="binding site" evidence="2">
    <location>
        <position position="95"/>
    </location>
    <ligand>
        <name>Zn(2+)</name>
        <dbReference type="ChEBI" id="CHEBI:29105"/>
        <note>catalytic</note>
    </ligand>
</feature>
<feature type="binding site" evidence="2">
    <location>
        <position position="97"/>
    </location>
    <ligand>
        <name>Zn(2+)</name>
        <dbReference type="ChEBI" id="CHEBI:29105"/>
        <note>catalytic</note>
    </ligand>
</feature>
<feature type="binding site" evidence="2">
    <location>
        <position position="120"/>
    </location>
    <ligand>
        <name>Zn(2+)</name>
        <dbReference type="ChEBI" id="CHEBI:29105"/>
        <note>catalytic</note>
    </ligand>
</feature>
<feature type="binding site" evidence="3">
    <location>
        <begin position="200"/>
        <end position="201"/>
    </location>
    <ligand>
        <name>substrate</name>
    </ligand>
</feature>
<feature type="binding site" evidence="2">
    <location>
        <position position="200"/>
    </location>
    <ligand>
        <name>substrate</name>
    </ligand>
</feature>
<feature type="modified residue" description="N-acetylalanine" evidence="2">
    <location>
        <position position="2"/>
    </location>
</feature>
<feature type="sequence conflict" description="In Ref. 1; AAA37354/AAA50291." evidence="6" ref="1">
    <original>P</original>
    <variation>S</variation>
    <location>
        <position position="238"/>
    </location>
</feature>
<comment type="function">
    <text evidence="2">Catalyzes the reversible hydration of carbon dioxide. Can hydrate cyanamide to urea.</text>
</comment>
<comment type="catalytic activity">
    <reaction evidence="2">
        <text>hydrogencarbonate + H(+) = CO2 + H2O</text>
        <dbReference type="Rhea" id="RHEA:10748"/>
        <dbReference type="ChEBI" id="CHEBI:15377"/>
        <dbReference type="ChEBI" id="CHEBI:15378"/>
        <dbReference type="ChEBI" id="CHEBI:16526"/>
        <dbReference type="ChEBI" id="CHEBI:17544"/>
        <dbReference type="EC" id="4.2.1.1"/>
    </reaction>
</comment>
<comment type="catalytic activity">
    <reaction evidence="2">
        <text>urea = cyanamide + H2O</text>
        <dbReference type="Rhea" id="RHEA:23056"/>
        <dbReference type="ChEBI" id="CHEBI:15377"/>
        <dbReference type="ChEBI" id="CHEBI:16199"/>
        <dbReference type="ChEBI" id="CHEBI:16698"/>
        <dbReference type="EC" id="4.2.1.69"/>
    </reaction>
</comment>
<comment type="cofactor">
    <cofactor evidence="2">
        <name>Zn(2+)</name>
        <dbReference type="ChEBI" id="CHEBI:29105"/>
    </cofactor>
</comment>
<comment type="activity regulation">
    <text evidence="2">Inhibited by acetazolamide.</text>
</comment>
<comment type="subcellular location">
    <subcellularLocation>
        <location evidence="1">Cytoplasm</location>
    </subcellularLocation>
</comment>
<comment type="similarity">
    <text evidence="6">Belongs to the alpha-carbonic anhydrase family.</text>
</comment>
<dbReference type="EC" id="4.2.1.1" evidence="2"/>
<dbReference type="EC" id="4.2.1.69" evidence="2"/>
<dbReference type="EMBL" id="M32452">
    <property type="protein sequence ID" value="AAA37354.1"/>
    <property type="molecule type" value="mRNA"/>
</dbReference>
<dbReference type="EMBL" id="L36655">
    <property type="protein sequence ID" value="AAA50291.1"/>
    <property type="molecule type" value="Genomic_DNA"/>
</dbReference>
<dbReference type="EMBL" id="M28197">
    <property type="protein sequence ID" value="AAA50291.1"/>
    <property type="status" value="JOINED"/>
    <property type="molecule type" value="Genomic_DNA"/>
</dbReference>
<dbReference type="EMBL" id="L36650">
    <property type="protein sequence ID" value="AAA50291.1"/>
    <property type="status" value="JOINED"/>
    <property type="molecule type" value="Genomic_DNA"/>
</dbReference>
<dbReference type="EMBL" id="L36651">
    <property type="protein sequence ID" value="AAA50291.1"/>
    <property type="status" value="JOINED"/>
    <property type="molecule type" value="Genomic_DNA"/>
</dbReference>
<dbReference type="EMBL" id="L36652">
    <property type="protein sequence ID" value="AAA50291.1"/>
    <property type="status" value="JOINED"/>
    <property type="molecule type" value="Genomic_DNA"/>
</dbReference>
<dbReference type="EMBL" id="L36653">
    <property type="protein sequence ID" value="AAA50291.1"/>
    <property type="status" value="JOINED"/>
    <property type="molecule type" value="Genomic_DNA"/>
</dbReference>
<dbReference type="EMBL" id="L36654">
    <property type="protein sequence ID" value="AAA50291.1"/>
    <property type="status" value="JOINED"/>
    <property type="molecule type" value="Genomic_DNA"/>
</dbReference>
<dbReference type="EMBL" id="AK003066">
    <property type="protein sequence ID" value="BAB22544.1"/>
    <property type="molecule type" value="mRNA"/>
</dbReference>
<dbReference type="EMBL" id="AK146372">
    <property type="protein sequence ID" value="BAE27121.1"/>
    <property type="molecule type" value="mRNA"/>
</dbReference>
<dbReference type="EMBL" id="AK162331">
    <property type="protein sequence ID" value="BAE36857.1"/>
    <property type="molecule type" value="mRNA"/>
</dbReference>
<dbReference type="EMBL" id="AK167969">
    <property type="protein sequence ID" value="BAE39964.1"/>
    <property type="molecule type" value="mRNA"/>
</dbReference>
<dbReference type="EMBL" id="AK172076">
    <property type="protein sequence ID" value="BAE42813.1"/>
    <property type="molecule type" value="mRNA"/>
</dbReference>
<dbReference type="EMBL" id="AC167976">
    <property type="status" value="NOT_ANNOTATED_CDS"/>
    <property type="molecule type" value="Genomic_DNA"/>
</dbReference>
<dbReference type="EMBL" id="CH466577">
    <property type="protein sequence ID" value="EDL05133.1"/>
    <property type="molecule type" value="Genomic_DNA"/>
</dbReference>
<dbReference type="EMBL" id="BC110681">
    <property type="protein sequence ID" value="AAI10682.1"/>
    <property type="molecule type" value="mRNA"/>
</dbReference>
<dbReference type="EMBL" id="BC132432">
    <property type="protein sequence ID" value="AAI32433.1"/>
    <property type="molecule type" value="mRNA"/>
</dbReference>
<dbReference type="EMBL" id="BC132434">
    <property type="protein sequence ID" value="AAI32435.1"/>
    <property type="molecule type" value="mRNA"/>
</dbReference>
<dbReference type="EMBL" id="BC011223">
    <property type="protein sequence ID" value="AAH11223.1"/>
    <property type="molecule type" value="mRNA"/>
</dbReference>
<dbReference type="CCDS" id="CCDS17248.1"/>
<dbReference type="PIR" id="A26344">
    <property type="entry name" value="A26344"/>
</dbReference>
<dbReference type="RefSeq" id="NP_001077426.1">
    <property type="nucleotide sequence ID" value="NM_001083957.1"/>
</dbReference>
<dbReference type="RefSeq" id="NP_033929.2">
    <property type="nucleotide sequence ID" value="NM_009799.4"/>
</dbReference>
<dbReference type="RefSeq" id="XP_011246439.1">
    <property type="nucleotide sequence ID" value="XM_011248137.1"/>
</dbReference>
<dbReference type="SMR" id="P13634"/>
<dbReference type="BioGRID" id="198481">
    <property type="interactions" value="3"/>
</dbReference>
<dbReference type="FunCoup" id="P13634">
    <property type="interactions" value="41"/>
</dbReference>
<dbReference type="STRING" id="10090.ENSMUSP00000137926"/>
<dbReference type="GlyGen" id="P13634">
    <property type="glycosylation" value="1 site, 1 O-linked glycan (1 site)"/>
</dbReference>
<dbReference type="iPTMnet" id="P13634"/>
<dbReference type="PhosphoSitePlus" id="P13634"/>
<dbReference type="CPTAC" id="non-CPTAC-3566"/>
<dbReference type="jPOST" id="P13634"/>
<dbReference type="PaxDb" id="10090-ENSMUSP00000091925"/>
<dbReference type="PeptideAtlas" id="P13634"/>
<dbReference type="ProteomicsDB" id="281756"/>
<dbReference type="Antibodypedia" id="1380">
    <property type="antibodies" value="646 antibodies from 42 providers"/>
</dbReference>
<dbReference type="DNASU" id="12346"/>
<dbReference type="Ensembl" id="ENSMUST00000094365.11">
    <property type="protein sequence ID" value="ENSMUSP00000091925.5"/>
    <property type="gene ID" value="ENSMUSG00000027556.16"/>
</dbReference>
<dbReference type="Ensembl" id="ENSMUST00000181860.8">
    <property type="protein sequence ID" value="ENSMUSP00000137926.2"/>
    <property type="gene ID" value="ENSMUSG00000027556.16"/>
</dbReference>
<dbReference type="GeneID" id="12346"/>
<dbReference type="KEGG" id="mmu:12346"/>
<dbReference type="UCSC" id="uc008oqp.1">
    <property type="organism name" value="mouse"/>
</dbReference>
<dbReference type="AGR" id="MGI:88268"/>
<dbReference type="CTD" id="12346"/>
<dbReference type="MGI" id="MGI:88268">
    <property type="gene designation" value="Car1"/>
</dbReference>
<dbReference type="VEuPathDB" id="HostDB:ENSMUSG00000027556"/>
<dbReference type="eggNOG" id="KOG0382">
    <property type="taxonomic scope" value="Eukaryota"/>
</dbReference>
<dbReference type="GeneTree" id="ENSGT00940000161270"/>
<dbReference type="HOGENOM" id="CLU_039326_2_1_1"/>
<dbReference type="InParanoid" id="P13634"/>
<dbReference type="OMA" id="FHVNYED"/>
<dbReference type="OrthoDB" id="429145at2759"/>
<dbReference type="PhylomeDB" id="P13634"/>
<dbReference type="TreeFam" id="TF316425"/>
<dbReference type="Reactome" id="R-MMU-1237044">
    <property type="pathway name" value="Erythrocytes take up carbon dioxide and release oxygen"/>
</dbReference>
<dbReference type="Reactome" id="R-MMU-1247673">
    <property type="pathway name" value="Erythrocytes take up oxygen and release carbon dioxide"/>
</dbReference>
<dbReference type="Reactome" id="R-MMU-1475029">
    <property type="pathway name" value="Reversible hydration of carbon dioxide"/>
</dbReference>
<dbReference type="BioGRID-ORCS" id="12346">
    <property type="hits" value="1 hit in 76 CRISPR screens"/>
</dbReference>
<dbReference type="ChiTaRS" id="Car1">
    <property type="organism name" value="mouse"/>
</dbReference>
<dbReference type="PRO" id="PR:P13634"/>
<dbReference type="Proteomes" id="UP000000589">
    <property type="component" value="Chromosome 3"/>
</dbReference>
<dbReference type="RNAct" id="P13634">
    <property type="molecule type" value="protein"/>
</dbReference>
<dbReference type="Bgee" id="ENSMUSG00000027556">
    <property type="expression patterns" value="Expressed in right colon and 48 other cell types or tissues"/>
</dbReference>
<dbReference type="ExpressionAtlas" id="P13634">
    <property type="expression patterns" value="baseline and differential"/>
</dbReference>
<dbReference type="GO" id="GO:0005737">
    <property type="term" value="C:cytoplasm"/>
    <property type="evidence" value="ECO:0007669"/>
    <property type="project" value="UniProtKB-SubCell"/>
</dbReference>
<dbReference type="GO" id="GO:0004064">
    <property type="term" value="F:arylesterase activity"/>
    <property type="evidence" value="ECO:0007669"/>
    <property type="project" value="Ensembl"/>
</dbReference>
<dbReference type="GO" id="GO:0004089">
    <property type="term" value="F:carbonate dehydratase activity"/>
    <property type="evidence" value="ECO:0000250"/>
    <property type="project" value="UniProtKB"/>
</dbReference>
<dbReference type="GO" id="GO:0018820">
    <property type="term" value="F:cyanamide hydratase activity"/>
    <property type="evidence" value="ECO:0000250"/>
    <property type="project" value="UniProtKB"/>
</dbReference>
<dbReference type="GO" id="GO:0008270">
    <property type="term" value="F:zinc ion binding"/>
    <property type="evidence" value="ECO:0007669"/>
    <property type="project" value="InterPro"/>
</dbReference>
<dbReference type="FunFam" id="3.10.200.10:FF:000001">
    <property type="entry name" value="Carbonic anhydrase 2"/>
    <property type="match status" value="1"/>
</dbReference>
<dbReference type="Gene3D" id="3.10.200.10">
    <property type="entry name" value="Alpha carbonic anhydrase"/>
    <property type="match status" value="1"/>
</dbReference>
<dbReference type="InterPro" id="IPR001148">
    <property type="entry name" value="CA_dom"/>
</dbReference>
<dbReference type="InterPro" id="IPR036398">
    <property type="entry name" value="CA_dom_sf"/>
</dbReference>
<dbReference type="InterPro" id="IPR023561">
    <property type="entry name" value="Carbonic_anhydrase_a-class"/>
</dbReference>
<dbReference type="InterPro" id="IPR018338">
    <property type="entry name" value="Carbonic_anhydrase_a-class_CS"/>
</dbReference>
<dbReference type="PANTHER" id="PTHR18952">
    <property type="entry name" value="CARBONIC ANHYDRASE"/>
    <property type="match status" value="1"/>
</dbReference>
<dbReference type="PANTHER" id="PTHR18952:SF282">
    <property type="entry name" value="CARBONIC ANHYDRASE 1"/>
    <property type="match status" value="1"/>
</dbReference>
<dbReference type="Pfam" id="PF00194">
    <property type="entry name" value="Carb_anhydrase"/>
    <property type="match status" value="1"/>
</dbReference>
<dbReference type="SMART" id="SM01057">
    <property type="entry name" value="Carb_anhydrase"/>
    <property type="match status" value="1"/>
</dbReference>
<dbReference type="SUPFAM" id="SSF51069">
    <property type="entry name" value="Carbonic anhydrase"/>
    <property type="match status" value="1"/>
</dbReference>
<dbReference type="PROSITE" id="PS00162">
    <property type="entry name" value="ALPHA_CA_1"/>
    <property type="match status" value="1"/>
</dbReference>
<dbReference type="PROSITE" id="PS51144">
    <property type="entry name" value="ALPHA_CA_2"/>
    <property type="match status" value="1"/>
</dbReference>
<accession>P13634</accession>
<accession>Q3TS19</accession>
<accession>Q9DC84</accession>
<name>CAH1_MOUSE</name>
<sequence length="261" mass="28331">MASADWGYGSENGPDQWSKLYPIANGNNQSPIDIKTSEANHDSSLKPLSISYNPATAKEIVNVGHSFHVIFDDSSNQSVLKGGPLADSYRLTQFHFHWGNSNDHGSEHTVDGTRYSGELHLVHWNSAKYSSASEAISKADGLAILGVLMKVGPANPSLQKVLDALNSVKTKGKRAPFTNFDPSSLLPSSLDYWTYFGSLTHPPLHESVTWVICKDSISLSPEQLAQLRGLLSSAEGEPAVPVLSNHRPPQPLKGRTVRASF</sequence>
<gene>
    <name type="primary">Ca1</name>
    <name type="synonym">Car1</name>
</gene>